<keyword id="KW-0002">3D-structure</keyword>
<keyword id="KW-0106">Calcium</keyword>
<keyword id="KW-0107">Calcium channel</keyword>
<keyword id="KW-0109">Calcium transport</keyword>
<keyword id="KW-0407">Ion channel</keyword>
<keyword id="KW-0406">Ion transport</keyword>
<keyword id="KW-0472">Membrane</keyword>
<keyword id="KW-0479">Metal-binding</keyword>
<keyword id="KW-0496">Mitochondrion</keyword>
<keyword id="KW-0999">Mitochondrion inner membrane</keyword>
<keyword id="KW-1185">Reference proteome</keyword>
<keyword id="KW-0812">Transmembrane</keyword>
<keyword id="KW-1133">Transmembrane helix</keyword>
<keyword id="KW-0813">Transport</keyword>
<accession>W2SDE2</accession>
<gene>
    <name evidence="3" type="primary">MCU</name>
    <name evidence="6" type="ORF">HMPREF1541_00236</name>
</gene>
<sequence length="346" mass="38934">MTKGKLLTTPSRLLKLVLPLSTVDHNTDRKDVAPLALLVHPQQPLSYLERLIQAELPPPDPQDSKSTTRSVTFRAMEAKDDEIKPRKKADTEGGGGSDGSVQSYSGAGREGEGKDEGEFVRWSPSTEIGDFIRDAARAKEFEVEIEGSPGVIKVAVPSFNDRTYYLRQRLRRTSRKISKLAAIKEECDKAAHRGAQRIALAGCGGLIGYWYIVYRLTFETDLGWDVMEPVTYLVGLSTLIGGYMWFLWHNREVSYRSALNITVSARQNKLYQAKGFSLQDWEGYLEEANAMRREIKAVASEYDVDWNETQDEGGDEKVTKALRDERKNNNGTKNKSKEGEEDDEDD</sequence>
<dbReference type="EMBL" id="KB822711">
    <property type="protein sequence ID" value="ETN46053.1"/>
    <property type="molecule type" value="Genomic_DNA"/>
</dbReference>
<dbReference type="RefSeq" id="XP_008710765.1">
    <property type="nucleotide sequence ID" value="XM_008712543.1"/>
</dbReference>
<dbReference type="PDB" id="6DNF">
    <property type="method" value="EM"/>
    <property type="resolution" value="3.20 A"/>
    <property type="chains" value="A/B/C/D=1-346"/>
</dbReference>
<dbReference type="PDBsum" id="6DNF"/>
<dbReference type="EMDB" id="EMD-7971"/>
<dbReference type="SMR" id="W2SDE2"/>
<dbReference type="STRING" id="1220924.W2SDE2"/>
<dbReference type="GeneID" id="19967575"/>
<dbReference type="VEuPathDB" id="FungiDB:HMPREF1541_00236"/>
<dbReference type="eggNOG" id="KOG2966">
    <property type="taxonomic scope" value="Eukaryota"/>
</dbReference>
<dbReference type="HOGENOM" id="CLU_035826_1_0_1"/>
<dbReference type="InParanoid" id="W2SDE2"/>
<dbReference type="OrthoDB" id="278338at2759"/>
<dbReference type="Proteomes" id="UP000030752">
    <property type="component" value="Unassembled WGS sequence"/>
</dbReference>
<dbReference type="GO" id="GO:0005743">
    <property type="term" value="C:mitochondrial inner membrane"/>
    <property type="evidence" value="ECO:0000314"/>
    <property type="project" value="UniProtKB"/>
</dbReference>
<dbReference type="GO" id="GO:1990246">
    <property type="term" value="C:uniplex complex"/>
    <property type="evidence" value="ECO:0007669"/>
    <property type="project" value="TreeGrafter"/>
</dbReference>
<dbReference type="GO" id="GO:0005262">
    <property type="term" value="F:calcium channel activity"/>
    <property type="evidence" value="ECO:0000314"/>
    <property type="project" value="UniProtKB"/>
</dbReference>
<dbReference type="GO" id="GO:0042802">
    <property type="term" value="F:identical protein binding"/>
    <property type="evidence" value="ECO:0000353"/>
    <property type="project" value="IntAct"/>
</dbReference>
<dbReference type="GO" id="GO:0046872">
    <property type="term" value="F:metal ion binding"/>
    <property type="evidence" value="ECO:0007669"/>
    <property type="project" value="UniProtKB-KW"/>
</dbReference>
<dbReference type="GO" id="GO:0015292">
    <property type="term" value="F:uniporter activity"/>
    <property type="evidence" value="ECO:0007669"/>
    <property type="project" value="TreeGrafter"/>
</dbReference>
<dbReference type="GO" id="GO:0036444">
    <property type="term" value="P:calcium import into the mitochondrion"/>
    <property type="evidence" value="ECO:0000314"/>
    <property type="project" value="UniProtKB"/>
</dbReference>
<dbReference type="GO" id="GO:0051560">
    <property type="term" value="P:mitochondrial calcium ion homeostasis"/>
    <property type="evidence" value="ECO:0007669"/>
    <property type="project" value="InterPro"/>
</dbReference>
<dbReference type="GO" id="GO:0051289">
    <property type="term" value="P:protein homotetramerization"/>
    <property type="evidence" value="ECO:0000314"/>
    <property type="project" value="UniProtKB"/>
</dbReference>
<dbReference type="InterPro" id="IPR006769">
    <property type="entry name" value="MCU_C"/>
</dbReference>
<dbReference type="InterPro" id="IPR039055">
    <property type="entry name" value="MCU_fam"/>
</dbReference>
<dbReference type="PANTHER" id="PTHR13462">
    <property type="entry name" value="CALCIUM UNIPORTER PROTEIN, MITOCHONDRIAL"/>
    <property type="match status" value="1"/>
</dbReference>
<dbReference type="PANTHER" id="PTHR13462:SF10">
    <property type="entry name" value="CALCIUM UNIPORTER PROTEIN, MITOCHONDRIAL"/>
    <property type="match status" value="1"/>
</dbReference>
<dbReference type="Pfam" id="PF04678">
    <property type="entry name" value="MCU"/>
    <property type="match status" value="1"/>
</dbReference>
<comment type="function">
    <text evidence="2">Highly selective calcium channel localized to the inner mitochondrial membrane, which mediates calcium uptake into the mitochondrial matrix (PubMed:29995857). Mitochondrial calcium homeostasis plays key roles in cellular physiology and regulates ATP production, cytoplasmic calcium signals and activation of cell death pathways (PubMed:29995857). Sufficient to operate as a pore-forming channel without the need of calcium-sensor or auxiliary subunit (PubMed:29995857).</text>
</comment>
<comment type="catalytic activity">
    <reaction evidence="2">
        <text>Ca(2+)(in) = Ca(2+)(out)</text>
        <dbReference type="Rhea" id="RHEA:29671"/>
        <dbReference type="ChEBI" id="CHEBI:29108"/>
    </reaction>
</comment>
<comment type="subunit">
    <text evidence="2">Homotetramer, assembles in a dimer or dimers configuration with two interfaces.</text>
</comment>
<comment type="interaction">
    <interactant intactId="EBI-20716966">
        <id>W2SDE2</id>
    </interactant>
    <interactant intactId="EBI-20716966">
        <id>W2SDE2</id>
        <label>MCU</label>
    </interactant>
    <organismsDiffer>false</organismsDiffer>
    <experiments>2</experiments>
</comment>
<comment type="subcellular location">
    <subcellularLocation>
        <location evidence="2">Mitochondrion inner membrane</location>
        <topology evidence="2">Multi-pass membrane protein</topology>
    </subcellularLocation>
</comment>
<comment type="domain">
    <text evidence="2">The selectivity filter, in which calcium ions are arranged in single file, is composed of two acidic rings separated by one helical turn along the central axis of the channel pore.</text>
</comment>
<comment type="similarity">
    <text evidence="4">Belongs to the MCU (TC 1.A.77) family.</text>
</comment>
<protein>
    <recommendedName>
        <fullName evidence="4">Calcium uniporter protein, mitochondrial</fullName>
        <shortName evidence="3">CeMCU</shortName>
    </recommendedName>
</protein>
<organism>
    <name type="scientific">Cyphellophora europaea (strain CBS 101466)</name>
    <name type="common">Phialophora europaea</name>
    <dbReference type="NCBI Taxonomy" id="1220924"/>
    <lineage>
        <taxon>Eukaryota</taxon>
        <taxon>Fungi</taxon>
        <taxon>Dikarya</taxon>
        <taxon>Ascomycota</taxon>
        <taxon>Pezizomycotina</taxon>
        <taxon>Eurotiomycetes</taxon>
        <taxon>Chaetothyriomycetidae</taxon>
        <taxon>Chaetothyriales</taxon>
        <taxon>Cyphellophoraceae</taxon>
        <taxon>Cyphellophora</taxon>
    </lineage>
</organism>
<feature type="chain" id="PRO_0000460493" description="Calcium uniporter protein, mitochondrial">
    <location>
        <begin position="1"/>
        <end position="346"/>
    </location>
</feature>
<feature type="topological domain" description="Mitochondrial matrix" evidence="5">
    <location>
        <begin position="1"/>
        <end position="195"/>
    </location>
</feature>
<feature type="transmembrane region" description="Helical" evidence="2 7">
    <location>
        <begin position="196"/>
        <end position="216"/>
    </location>
</feature>
<feature type="topological domain" description="Mitochondrial intermembrane" evidence="5">
    <location>
        <begin position="217"/>
        <end position="226"/>
    </location>
</feature>
<feature type="transmembrane region" description="Helical" evidence="2 7">
    <location>
        <begin position="227"/>
        <end position="248"/>
    </location>
</feature>
<feature type="topological domain" description="Mitochondrial matrix" evidence="5">
    <location>
        <begin position="249"/>
        <end position="346"/>
    </location>
</feature>
<feature type="region of interest" description="Disordered" evidence="1">
    <location>
        <begin position="55"/>
        <end position="120"/>
    </location>
</feature>
<feature type="region of interest" description="Disordered" evidence="1">
    <location>
        <begin position="306"/>
        <end position="346"/>
    </location>
</feature>
<feature type="short sequence motif" description="Selectivity filter" evidence="5">
    <location>
        <begin position="224"/>
        <end position="232"/>
    </location>
</feature>
<feature type="compositionally biased region" description="Basic and acidic residues" evidence="1">
    <location>
        <begin position="76"/>
        <end position="91"/>
    </location>
</feature>
<feature type="compositionally biased region" description="Basic and acidic residues" evidence="1">
    <location>
        <begin position="109"/>
        <end position="119"/>
    </location>
</feature>
<feature type="compositionally biased region" description="Basic and acidic residues" evidence="1">
    <location>
        <begin position="315"/>
        <end position="328"/>
    </location>
</feature>
<feature type="binding site" evidence="5">
    <location>
        <position position="228"/>
    </location>
    <ligand>
        <name>Ca(2+)</name>
        <dbReference type="ChEBI" id="CHEBI:29108"/>
    </ligand>
</feature>
<feature type="strand" evidence="8">
    <location>
        <begin position="10"/>
        <end position="13"/>
    </location>
</feature>
<feature type="strand" evidence="8">
    <location>
        <begin position="16"/>
        <end position="18"/>
    </location>
</feature>
<feature type="strand" evidence="8">
    <location>
        <begin position="20"/>
        <end position="23"/>
    </location>
</feature>
<feature type="strand" evidence="8">
    <location>
        <begin position="35"/>
        <end position="38"/>
    </location>
</feature>
<feature type="helix" evidence="8">
    <location>
        <begin position="45"/>
        <end position="55"/>
    </location>
</feature>
<feature type="strand" evidence="8">
    <location>
        <begin position="112"/>
        <end position="116"/>
    </location>
</feature>
<feature type="turn" evidence="8">
    <location>
        <begin position="117"/>
        <end position="119"/>
    </location>
</feature>
<feature type="strand" evidence="8">
    <location>
        <begin position="126"/>
        <end position="128"/>
    </location>
</feature>
<feature type="turn" evidence="8">
    <location>
        <begin position="129"/>
        <end position="131"/>
    </location>
</feature>
<feature type="helix" evidence="8">
    <location>
        <begin position="132"/>
        <end position="138"/>
    </location>
</feature>
<feature type="strand" evidence="8">
    <location>
        <begin position="141"/>
        <end position="145"/>
    </location>
</feature>
<feature type="strand" evidence="8">
    <location>
        <begin position="151"/>
        <end position="154"/>
    </location>
</feature>
<feature type="helix" evidence="8">
    <location>
        <begin position="159"/>
        <end position="163"/>
    </location>
</feature>
<feature type="turn" evidence="8">
    <location>
        <begin position="164"/>
        <end position="166"/>
    </location>
</feature>
<feature type="helix" evidence="8">
    <location>
        <begin position="167"/>
        <end position="218"/>
    </location>
</feature>
<feature type="strand" evidence="8">
    <location>
        <begin position="220"/>
        <end position="222"/>
    </location>
</feature>
<feature type="helix" evidence="8">
    <location>
        <begin position="224"/>
        <end position="250"/>
    </location>
</feature>
<feature type="helix" evidence="8">
    <location>
        <begin position="278"/>
        <end position="302"/>
    </location>
</feature>
<reference key="1">
    <citation type="submission" date="2013-03" db="EMBL/GenBank/DDBJ databases">
        <title>The Genome Sequence of Phialophora europaea CBS 101466.</title>
        <authorList>
            <consortium name="The Broad Institute Genomics Platform"/>
            <person name="Cuomo C."/>
            <person name="de Hoog S."/>
            <person name="Gorbushina A."/>
            <person name="Walker B."/>
            <person name="Young S.K."/>
            <person name="Zeng Q."/>
            <person name="Gargeya S."/>
            <person name="Fitzgerald M."/>
            <person name="Haas B."/>
            <person name="Abouelleil A."/>
            <person name="Allen A.W."/>
            <person name="Alvarado L."/>
            <person name="Arachchi H.M."/>
            <person name="Berlin A.M."/>
            <person name="Chapman S.B."/>
            <person name="Gainer-Dewar J."/>
            <person name="Goldberg J."/>
            <person name="Griggs A."/>
            <person name="Gujja S."/>
            <person name="Hansen M."/>
            <person name="Howarth C."/>
            <person name="Imamovic A."/>
            <person name="Ireland A."/>
            <person name="Larimer J."/>
            <person name="McCowan C."/>
            <person name="Murphy C."/>
            <person name="Pearson M."/>
            <person name="Poon T.W."/>
            <person name="Priest M."/>
            <person name="Roberts A."/>
            <person name="Saif S."/>
            <person name="Shea T."/>
            <person name="Sisk P."/>
            <person name="Sykes S."/>
            <person name="Wortman J."/>
            <person name="Nusbaum C."/>
            <person name="Birren B."/>
        </authorList>
    </citation>
    <scope>NUCLEOTIDE SEQUENCE [LARGE SCALE GENOMIC DNA]</scope>
    <source>
        <strain>CBS 101466</strain>
    </source>
</reference>
<reference evidence="7" key="2">
    <citation type="journal article" date="2018" name="Nature">
        <title>Cryo-EM structures of fungal and metazoan mitochondrial calcium uniporters.</title>
        <authorList>
            <person name="Baradaran R."/>
            <person name="Wang C."/>
            <person name="Siliciano A.F."/>
            <person name="Long S.B."/>
        </authorList>
    </citation>
    <scope>STRUCTURE BY ELECTRON MICROSCOPY (3.20 ANGSTROMS)</scope>
    <scope>FUNCTION</scope>
    <scope>TRANSPORTER ACTIVITY</scope>
    <scope>SUBUNIT</scope>
    <scope>SUBCELLULAR LOCATION</scope>
    <scope>DOMAIN</scope>
</reference>
<proteinExistence type="evidence at protein level"/>
<evidence type="ECO:0000256" key="1">
    <source>
        <dbReference type="SAM" id="MobiDB-lite"/>
    </source>
</evidence>
<evidence type="ECO:0000269" key="2">
    <source>
    </source>
</evidence>
<evidence type="ECO:0000303" key="3">
    <source>
    </source>
</evidence>
<evidence type="ECO:0000305" key="4"/>
<evidence type="ECO:0000305" key="5">
    <source>
    </source>
</evidence>
<evidence type="ECO:0000312" key="6">
    <source>
        <dbReference type="EMBL" id="ETN46053.1"/>
    </source>
</evidence>
<evidence type="ECO:0007744" key="7">
    <source>
        <dbReference type="PDB" id="6DNF"/>
    </source>
</evidence>
<evidence type="ECO:0007829" key="8">
    <source>
        <dbReference type="PDB" id="6DNF"/>
    </source>
</evidence>
<name>MCU_CYPE1</name>